<name>FAX2_ARATH</name>
<accession>Q94A32</accession>
<accession>Q8LC37</accession>
<accession>Q9M238</accession>
<dbReference type="EMBL" id="AL138644">
    <property type="protein sequence ID" value="CAB81792.1"/>
    <property type="status" value="ALT_SEQ"/>
    <property type="molecule type" value="Genomic_DNA"/>
</dbReference>
<dbReference type="EMBL" id="CP002686">
    <property type="protein sequence ID" value="AEE77802.1"/>
    <property type="molecule type" value="Genomic_DNA"/>
</dbReference>
<dbReference type="EMBL" id="AY050422">
    <property type="protein sequence ID" value="AAK91438.1"/>
    <property type="molecule type" value="mRNA"/>
</dbReference>
<dbReference type="EMBL" id="BT000533">
    <property type="protein sequence ID" value="AAN18102.1"/>
    <property type="molecule type" value="mRNA"/>
</dbReference>
<dbReference type="EMBL" id="AY086820">
    <property type="protein sequence ID" value="AAM63868.1"/>
    <property type="molecule type" value="mRNA"/>
</dbReference>
<dbReference type="PIR" id="T47394">
    <property type="entry name" value="T47394"/>
</dbReference>
<dbReference type="RefSeq" id="NP_566866.1">
    <property type="nucleotide sequence ID" value="NM_114220.4"/>
</dbReference>
<dbReference type="FunCoup" id="Q94A32">
    <property type="interactions" value="52"/>
</dbReference>
<dbReference type="IntAct" id="Q94A32">
    <property type="interactions" value="7"/>
</dbReference>
<dbReference type="STRING" id="3702.Q94A32"/>
<dbReference type="TCDB" id="2.A.126.1.16">
    <property type="family name" value="the fatty acid exporter (fax) family"/>
</dbReference>
<dbReference type="PaxDb" id="3702-AT3G43520.1"/>
<dbReference type="ProteomicsDB" id="230960"/>
<dbReference type="EnsemblPlants" id="AT3G43520.1">
    <property type="protein sequence ID" value="AT3G43520.1"/>
    <property type="gene ID" value="AT3G43520"/>
</dbReference>
<dbReference type="GeneID" id="823438"/>
<dbReference type="Gramene" id="AT3G43520.1">
    <property type="protein sequence ID" value="AT3G43520.1"/>
    <property type="gene ID" value="AT3G43520"/>
</dbReference>
<dbReference type="KEGG" id="ath:AT3G43520"/>
<dbReference type="Araport" id="AT3G43520"/>
<dbReference type="TAIR" id="AT3G43520"/>
<dbReference type="eggNOG" id="KOG4267">
    <property type="taxonomic scope" value="Eukaryota"/>
</dbReference>
<dbReference type="HOGENOM" id="CLU_078925_1_0_1"/>
<dbReference type="InParanoid" id="Q94A32"/>
<dbReference type="OMA" id="HFRVQAW"/>
<dbReference type="PRO" id="PR:Q94A32"/>
<dbReference type="Proteomes" id="UP000006548">
    <property type="component" value="Chromosome 3"/>
</dbReference>
<dbReference type="ExpressionAtlas" id="Q94A32">
    <property type="expression patterns" value="baseline and differential"/>
</dbReference>
<dbReference type="GO" id="GO:0009507">
    <property type="term" value="C:chloroplast"/>
    <property type="evidence" value="ECO:0007005"/>
    <property type="project" value="TAIR"/>
</dbReference>
<dbReference type="GO" id="GO:0009941">
    <property type="term" value="C:chloroplast envelope"/>
    <property type="evidence" value="ECO:0007005"/>
    <property type="project" value="TAIR"/>
</dbReference>
<dbReference type="GO" id="GO:0031969">
    <property type="term" value="C:chloroplast membrane"/>
    <property type="evidence" value="ECO:0007669"/>
    <property type="project" value="UniProtKB-SubCell"/>
</dbReference>
<dbReference type="GO" id="GO:0005829">
    <property type="term" value="C:cytosol"/>
    <property type="evidence" value="ECO:0007005"/>
    <property type="project" value="TAIR"/>
</dbReference>
<dbReference type="GO" id="GO:0009536">
    <property type="term" value="C:plastid"/>
    <property type="evidence" value="ECO:0007005"/>
    <property type="project" value="TAIR"/>
</dbReference>
<dbReference type="FunFam" id="1.10.10.1740:FF:000002">
    <property type="entry name" value="Transmembrane protein 14C"/>
    <property type="match status" value="1"/>
</dbReference>
<dbReference type="Gene3D" id="1.10.10.1740">
    <property type="entry name" value="Transmembrane protein 14-like"/>
    <property type="match status" value="1"/>
</dbReference>
<dbReference type="InterPro" id="IPR005349">
    <property type="entry name" value="TMEM14"/>
</dbReference>
<dbReference type="InterPro" id="IPR044890">
    <property type="entry name" value="TMEM14_sf"/>
</dbReference>
<dbReference type="PANTHER" id="PTHR12668:SF37">
    <property type="entry name" value="PROTEIN FATTY ACID EXPORT 2, CHLOROPLASTIC"/>
    <property type="match status" value="1"/>
</dbReference>
<dbReference type="PANTHER" id="PTHR12668">
    <property type="entry name" value="TRANSMEMBRANE PROTEIN 14, 15"/>
    <property type="match status" value="1"/>
</dbReference>
<dbReference type="Pfam" id="PF03647">
    <property type="entry name" value="Tmemb_14"/>
    <property type="match status" value="1"/>
</dbReference>
<keyword id="KW-0150">Chloroplast</keyword>
<keyword id="KW-0472">Membrane</keyword>
<keyword id="KW-0934">Plastid</keyword>
<keyword id="KW-1185">Reference proteome</keyword>
<keyword id="KW-0809">Transit peptide</keyword>
<keyword id="KW-0812">Transmembrane</keyword>
<keyword id="KW-1133">Transmembrane helix</keyword>
<comment type="function">
    <text evidence="1">May be involved in free fatty acids export from the plastids.</text>
</comment>
<comment type="subcellular location">
    <subcellularLocation>
        <location evidence="5">Plastid</location>
        <location evidence="5">Chloroplast membrane</location>
        <topology evidence="5">Multi-pass membrane protein</topology>
    </subcellularLocation>
</comment>
<comment type="developmental stage">
    <text evidence="6">Highly expressed during seed development and germination.</text>
</comment>
<comment type="miscellaneous">
    <text evidence="6">For all TMEM14 proteins, 4 hydrophobic alpha-helical domains are predicted. However, NMR structure determination of the human TMEM14A showed that only 3 of these helices are membrane-spaning while the amphiphilic N-terminal helix is probably located at the lipid micelle-water interface.</text>
</comment>
<comment type="similarity">
    <text evidence="5">Belongs to the TMEM14 family.</text>
</comment>
<comment type="sequence caution" evidence="5">
    <conflict type="erroneous gene model prediction">
        <sequence resource="EMBL-CDS" id="CAB81792"/>
    </conflict>
</comment>
<protein>
    <recommendedName>
        <fullName evidence="4">Protein FATTY ACID EXPORT 2, chloroplastic</fullName>
        <shortName evidence="4">At-FAX2</shortName>
    </recommendedName>
</protein>
<organism evidence="8">
    <name type="scientific">Arabidopsis thaliana</name>
    <name type="common">Mouse-ear cress</name>
    <dbReference type="NCBI Taxonomy" id="3702"/>
    <lineage>
        <taxon>Eukaryota</taxon>
        <taxon>Viridiplantae</taxon>
        <taxon>Streptophyta</taxon>
        <taxon>Embryophyta</taxon>
        <taxon>Tracheophyta</taxon>
        <taxon>Spermatophyta</taxon>
        <taxon>Magnoliopsida</taxon>
        <taxon>eudicotyledons</taxon>
        <taxon>Gunneridae</taxon>
        <taxon>Pentapetalae</taxon>
        <taxon>rosids</taxon>
        <taxon>malvids</taxon>
        <taxon>Brassicales</taxon>
        <taxon>Brassicaceae</taxon>
        <taxon>Camelineae</taxon>
        <taxon>Arabidopsis</taxon>
    </lineage>
</organism>
<feature type="transit peptide" description="Chloroplast" evidence="2">
    <location>
        <begin position="1"/>
        <end position="84"/>
    </location>
</feature>
<feature type="chain" id="PRO_0000432802" description="Protein FATTY ACID EXPORT 2, chloroplastic" evidence="2">
    <location>
        <begin position="85"/>
        <end position="240"/>
    </location>
</feature>
<feature type="transmembrane region" description="Helical; Name=1" evidence="2">
    <location>
        <begin position="164"/>
        <end position="184"/>
    </location>
</feature>
<feature type="transmembrane region" description="Helical; Name=2" evidence="2">
    <location>
        <begin position="186"/>
        <end position="206"/>
    </location>
</feature>
<feature type="transmembrane region" description="Helical; Name=3" evidence="2">
    <location>
        <begin position="214"/>
        <end position="234"/>
    </location>
</feature>
<feature type="region of interest" description="Disordered" evidence="3">
    <location>
        <begin position="97"/>
        <end position="134"/>
    </location>
</feature>
<feature type="compositionally biased region" description="Gly residues" evidence="3">
    <location>
        <begin position="97"/>
        <end position="113"/>
    </location>
</feature>
<feature type="compositionally biased region" description="Acidic residues" evidence="3">
    <location>
        <begin position="114"/>
        <end position="125"/>
    </location>
</feature>
<feature type="sequence conflict" description="In Ref. 4; AAM63868." evidence="5" ref="4">
    <original>H</original>
    <variation>L</variation>
    <location>
        <position position="22"/>
    </location>
</feature>
<feature type="sequence conflict" description="In Ref. 4; AAM63868." evidence="5" ref="4">
    <original>I</original>
    <variation>N</variation>
    <location>
        <position position="92"/>
    </location>
</feature>
<gene>
    <name evidence="4" type="primary">FAX2</name>
    <name evidence="7" type="ordered locus">At3g43520</name>
    <name evidence="9" type="ORF">T18D12.90</name>
</gene>
<proteinExistence type="evidence at transcript level"/>
<reference key="1">
    <citation type="journal article" date="2000" name="Nature">
        <title>Sequence and analysis of chromosome 3 of the plant Arabidopsis thaliana.</title>
        <authorList>
            <person name="Salanoubat M."/>
            <person name="Lemcke K."/>
            <person name="Rieger M."/>
            <person name="Ansorge W."/>
            <person name="Unseld M."/>
            <person name="Fartmann B."/>
            <person name="Valle G."/>
            <person name="Bloecker H."/>
            <person name="Perez-Alonso M."/>
            <person name="Obermaier B."/>
            <person name="Delseny M."/>
            <person name="Boutry M."/>
            <person name="Grivell L.A."/>
            <person name="Mache R."/>
            <person name="Puigdomenech P."/>
            <person name="De Simone V."/>
            <person name="Choisne N."/>
            <person name="Artiguenave F."/>
            <person name="Robert C."/>
            <person name="Brottier P."/>
            <person name="Wincker P."/>
            <person name="Cattolico L."/>
            <person name="Weissenbach J."/>
            <person name="Saurin W."/>
            <person name="Quetier F."/>
            <person name="Schaefer M."/>
            <person name="Mueller-Auer S."/>
            <person name="Gabel C."/>
            <person name="Fuchs M."/>
            <person name="Benes V."/>
            <person name="Wurmbach E."/>
            <person name="Drzonek H."/>
            <person name="Erfle H."/>
            <person name="Jordan N."/>
            <person name="Bangert S."/>
            <person name="Wiedelmann R."/>
            <person name="Kranz H."/>
            <person name="Voss H."/>
            <person name="Holland R."/>
            <person name="Brandt P."/>
            <person name="Nyakatura G."/>
            <person name="Vezzi A."/>
            <person name="D'Angelo M."/>
            <person name="Pallavicini A."/>
            <person name="Toppo S."/>
            <person name="Simionati B."/>
            <person name="Conrad A."/>
            <person name="Hornischer K."/>
            <person name="Kauer G."/>
            <person name="Loehnert T.-H."/>
            <person name="Nordsiek G."/>
            <person name="Reichelt J."/>
            <person name="Scharfe M."/>
            <person name="Schoen O."/>
            <person name="Bargues M."/>
            <person name="Terol J."/>
            <person name="Climent J."/>
            <person name="Navarro P."/>
            <person name="Collado C."/>
            <person name="Perez-Perez A."/>
            <person name="Ottenwaelder B."/>
            <person name="Duchemin D."/>
            <person name="Cooke R."/>
            <person name="Laudie M."/>
            <person name="Berger-Llauro C."/>
            <person name="Purnelle B."/>
            <person name="Masuy D."/>
            <person name="de Haan M."/>
            <person name="Maarse A.C."/>
            <person name="Alcaraz J.-P."/>
            <person name="Cottet A."/>
            <person name="Casacuberta E."/>
            <person name="Monfort A."/>
            <person name="Argiriou A."/>
            <person name="Flores M."/>
            <person name="Liguori R."/>
            <person name="Vitale D."/>
            <person name="Mannhaupt G."/>
            <person name="Haase D."/>
            <person name="Schoof H."/>
            <person name="Rudd S."/>
            <person name="Zaccaria P."/>
            <person name="Mewes H.-W."/>
            <person name="Mayer K.F.X."/>
            <person name="Kaul S."/>
            <person name="Town C.D."/>
            <person name="Koo H.L."/>
            <person name="Tallon L.J."/>
            <person name="Jenkins J."/>
            <person name="Rooney T."/>
            <person name="Rizzo M."/>
            <person name="Walts A."/>
            <person name="Utterback T."/>
            <person name="Fujii C.Y."/>
            <person name="Shea T.P."/>
            <person name="Creasy T.H."/>
            <person name="Haas B."/>
            <person name="Maiti R."/>
            <person name="Wu D."/>
            <person name="Peterson J."/>
            <person name="Van Aken S."/>
            <person name="Pai G."/>
            <person name="Militscher J."/>
            <person name="Sellers P."/>
            <person name="Gill J.E."/>
            <person name="Feldblyum T.V."/>
            <person name="Preuss D."/>
            <person name="Lin X."/>
            <person name="Nierman W.C."/>
            <person name="Salzberg S.L."/>
            <person name="White O."/>
            <person name="Venter J.C."/>
            <person name="Fraser C.M."/>
            <person name="Kaneko T."/>
            <person name="Nakamura Y."/>
            <person name="Sato S."/>
            <person name="Kato T."/>
            <person name="Asamizu E."/>
            <person name="Sasamoto S."/>
            <person name="Kimura T."/>
            <person name="Idesawa K."/>
            <person name="Kawashima K."/>
            <person name="Kishida Y."/>
            <person name="Kiyokawa C."/>
            <person name="Kohara M."/>
            <person name="Matsumoto M."/>
            <person name="Matsuno A."/>
            <person name="Muraki A."/>
            <person name="Nakayama S."/>
            <person name="Nakazaki N."/>
            <person name="Shinpo S."/>
            <person name="Takeuchi C."/>
            <person name="Wada T."/>
            <person name="Watanabe A."/>
            <person name="Yamada M."/>
            <person name="Yasuda M."/>
            <person name="Tabata S."/>
        </authorList>
    </citation>
    <scope>NUCLEOTIDE SEQUENCE [LARGE SCALE GENOMIC DNA]</scope>
    <source>
        <strain>cv. Columbia</strain>
    </source>
</reference>
<reference key="2">
    <citation type="journal article" date="2017" name="Plant J.">
        <title>Araport11: a complete reannotation of the Arabidopsis thaliana reference genome.</title>
        <authorList>
            <person name="Cheng C.Y."/>
            <person name="Krishnakumar V."/>
            <person name="Chan A.P."/>
            <person name="Thibaud-Nissen F."/>
            <person name="Schobel S."/>
            <person name="Town C.D."/>
        </authorList>
    </citation>
    <scope>GENOME REANNOTATION</scope>
    <source>
        <strain>cv. Columbia</strain>
    </source>
</reference>
<reference key="3">
    <citation type="journal article" date="2003" name="Science">
        <title>Empirical analysis of transcriptional activity in the Arabidopsis genome.</title>
        <authorList>
            <person name="Yamada K."/>
            <person name="Lim J."/>
            <person name="Dale J.M."/>
            <person name="Chen H."/>
            <person name="Shinn P."/>
            <person name="Palm C.J."/>
            <person name="Southwick A.M."/>
            <person name="Wu H.C."/>
            <person name="Kim C.J."/>
            <person name="Nguyen M."/>
            <person name="Pham P.K."/>
            <person name="Cheuk R.F."/>
            <person name="Karlin-Newmann G."/>
            <person name="Liu S.X."/>
            <person name="Lam B."/>
            <person name="Sakano H."/>
            <person name="Wu T."/>
            <person name="Yu G."/>
            <person name="Miranda M."/>
            <person name="Quach H.L."/>
            <person name="Tripp M."/>
            <person name="Chang C.H."/>
            <person name="Lee J.M."/>
            <person name="Toriumi M.J."/>
            <person name="Chan M.M."/>
            <person name="Tang C.C."/>
            <person name="Onodera C.S."/>
            <person name="Deng J.M."/>
            <person name="Akiyama K."/>
            <person name="Ansari Y."/>
            <person name="Arakawa T."/>
            <person name="Banh J."/>
            <person name="Banno F."/>
            <person name="Bowser L."/>
            <person name="Brooks S.Y."/>
            <person name="Carninci P."/>
            <person name="Chao Q."/>
            <person name="Choy N."/>
            <person name="Enju A."/>
            <person name="Goldsmith A.D."/>
            <person name="Gurjal M."/>
            <person name="Hansen N.F."/>
            <person name="Hayashizaki Y."/>
            <person name="Johnson-Hopson C."/>
            <person name="Hsuan V.W."/>
            <person name="Iida K."/>
            <person name="Karnes M."/>
            <person name="Khan S."/>
            <person name="Koesema E."/>
            <person name="Ishida J."/>
            <person name="Jiang P.X."/>
            <person name="Jones T."/>
            <person name="Kawai J."/>
            <person name="Kamiya A."/>
            <person name="Meyers C."/>
            <person name="Nakajima M."/>
            <person name="Narusaka M."/>
            <person name="Seki M."/>
            <person name="Sakurai T."/>
            <person name="Satou M."/>
            <person name="Tamse R."/>
            <person name="Vaysberg M."/>
            <person name="Wallender E.K."/>
            <person name="Wong C."/>
            <person name="Yamamura Y."/>
            <person name="Yuan S."/>
            <person name="Shinozaki K."/>
            <person name="Davis R.W."/>
            <person name="Theologis A."/>
            <person name="Ecker J.R."/>
        </authorList>
    </citation>
    <scope>NUCLEOTIDE SEQUENCE [LARGE SCALE MRNA]</scope>
    <source>
        <strain>cv. Columbia</strain>
    </source>
</reference>
<reference key="4">
    <citation type="submission" date="2002-03" db="EMBL/GenBank/DDBJ databases">
        <title>Full-length cDNA from Arabidopsis thaliana.</title>
        <authorList>
            <person name="Brover V.V."/>
            <person name="Troukhan M.E."/>
            <person name="Alexandrov N.A."/>
            <person name="Lu Y.-P."/>
            <person name="Flavell R.B."/>
            <person name="Feldmann K.A."/>
        </authorList>
    </citation>
    <scope>NUCLEOTIDE SEQUENCE [LARGE SCALE MRNA]</scope>
</reference>
<reference key="5">
    <citation type="journal article" date="2015" name="PLoS Biol.">
        <title>FAX1, a novel membrane protein mediating plastid fatty acid export.</title>
        <authorList>
            <person name="Li N."/>
            <person name="Guegel I.L."/>
            <person name="Giavalisco P."/>
            <person name="Zeisler V."/>
            <person name="Schreiber L."/>
            <person name="Soll J."/>
            <person name="Philippar K."/>
        </authorList>
    </citation>
    <scope>GENE FAMILY</scope>
    <scope>NOMENCLATURE</scope>
    <scope>DEVELOPMENTAL STAGE</scope>
</reference>
<evidence type="ECO:0000250" key="1">
    <source>
        <dbReference type="UniProtKB" id="Q93V66"/>
    </source>
</evidence>
<evidence type="ECO:0000255" key="2"/>
<evidence type="ECO:0000256" key="3">
    <source>
        <dbReference type="SAM" id="MobiDB-lite"/>
    </source>
</evidence>
<evidence type="ECO:0000303" key="4">
    <source>
    </source>
</evidence>
<evidence type="ECO:0000305" key="5"/>
<evidence type="ECO:0000305" key="6">
    <source>
    </source>
</evidence>
<evidence type="ECO:0000312" key="7">
    <source>
        <dbReference type="Araport" id="AT3G43520"/>
    </source>
</evidence>
<evidence type="ECO:0000312" key="8">
    <source>
        <dbReference type="EMBL" id="AAK91438.1"/>
    </source>
</evidence>
<evidence type="ECO:0000312" key="9">
    <source>
        <dbReference type="EMBL" id="CAB81792.1"/>
    </source>
</evidence>
<sequence>MADLILSSSSAQSSLLHVRPNHYLLNTSTASPIRSVRFQNSNGFHPLAFASGHRRLPLGAVVPSDSTKTITSTITANCVDSGVKAVEVEPTIDYGGGGGIGGDKFGGGGGGGDGNDDGGEDDKEESDGKKSTPLSMSQKLTLGYAFLVGVGGLMGYLKSGSQKSLLAGGLSAAVLLYVFSQLPTKPVLASTVGVVMAGALMYVMGTRYMRSKKIFPAGVVSIMSFIMTGGYIHGIMRSLH</sequence>